<keyword id="KW-0004">4Fe-4S</keyword>
<keyword id="KW-0408">Iron</keyword>
<keyword id="KW-0411">Iron-sulfur</keyword>
<keyword id="KW-0479">Metal-binding</keyword>
<keyword id="KW-0500">Molybdenum</keyword>
<keyword id="KW-0520">NAD</keyword>
<keyword id="KW-0560">Oxidoreductase</keyword>
<keyword id="KW-0574">Periplasm</keyword>
<keyword id="KW-1185">Reference proteome</keyword>
<keyword id="KW-0712">Selenocysteine</keyword>
<keyword id="KW-0732">Signal</keyword>
<organism>
    <name type="scientific">Haemophilus influenzae (strain ATCC 51907 / DSM 11121 / KW20 / Rd)</name>
    <dbReference type="NCBI Taxonomy" id="71421"/>
    <lineage>
        <taxon>Bacteria</taxon>
        <taxon>Pseudomonadati</taxon>
        <taxon>Pseudomonadota</taxon>
        <taxon>Gammaproteobacteria</taxon>
        <taxon>Pasteurellales</taxon>
        <taxon>Pasteurellaceae</taxon>
        <taxon>Haemophilus</taxon>
    </lineage>
</organism>
<evidence type="ECO:0000250" key="1"/>
<evidence type="ECO:0000255" key="2">
    <source>
        <dbReference type="PROSITE-ProRule" id="PRU00648"/>
    </source>
</evidence>
<evidence type="ECO:0000255" key="3">
    <source>
        <dbReference type="PROSITE-ProRule" id="PRU01004"/>
    </source>
</evidence>
<evidence type="ECO:0000305" key="4"/>
<protein>
    <recommendedName>
        <fullName>Formate dehydrogenase major subunit</fullName>
        <ecNumber>1.17.1.9</ecNumber>
    </recommendedName>
    <alternativeName>
        <fullName>Formate dehydrogenase subunit alpha</fullName>
        <shortName>FDH subunit alpha</shortName>
    </alternativeName>
</protein>
<sequence length="1028" mass="115451">MQVSRRKFFKICAGGMAGTSAAMLGFAPANVLAAPREYKLLRAFESRNTCTYCAVSCGMLLYSTGKPYNSLSSHTGTNTRSKLFHIEGDPDHPVSRGALCPKGAGSLDYVNSESRSLYPQYRAPGSDKWERISWKDAIKRIARLMKDDRDANFVEKDSNGKTVNRWATTGIMTASAMSNEAALLTQKWIRMLGMVPVCNQANTUHGPTVASLAPSFGRGAMTNNWVDIKNANLIIVQGGNPAEAHPVGFRWAIEAKKNGAKIIVIDPRFNRTASVADLHAPIRSGSDITFLMGVIRYLLETNQIQHEYVKHYTNASFLIDEGFKFEDGLFVGYNEEKRNYDKSKWNYQFDENGHAKRDMTLQHPRCVINILKEHVSRYTPEMVERITGVKQKLFLQICEEIGKTSVPNKTMTHLYALGFTEHSIGTQNIRSMAIIQLLLGNMGMPGGGINALRGHSNVQGTTDMGLLPMSLPGYMRLPNDKDTSYDQYINAITPKDIVPNQVNYYRHTSKFFVSMMKTFYGDNATKENGWGFDFLPKADRLYDPITHVKLMNEGKLHGWILQGFNVLNSLPNKNKTLSGMSKLKYLVVMDPLQTESSEFWRNFGESNNVNPAEIQTEVFRLPTTCFAEEEGSIVNSGRWTQWHWKGCDQPGEALPDVDILSMLREEMHELYKKEGGQGIESFEAMTWNYAQPHSPSAVELAKELNGYALEDLYDPNGNLMYKKGQLLNGFAHLRDDGTTTSGNWLYVGQWTEKGNQTANRDNSDPSGLGCTIGWGFAWPANRRVLYSRASLDINGNPWDKNRQLIKWNGKNWNWFDIADYGTQPPGSDTGPFIMSAEGVGRLFAVDKIANGPMPEHYEPVESPIDTNPFHPNVVTDPTLRIYKEDREFIGSNKEYPFVATTYRLTEHFHSWTAQSALNIIAQPQQFVEIGEKLAAEKGIQKGDMVKITSRRGYIKAVAVVTKRLKDLEIDGRVVHHIGLPIHWNMKALNGKGNRGFSTNTLTPSWGEAITQTPEYKTFLVNIEKVGEA</sequence>
<gene>
    <name type="primary">fdxG</name>
    <name type="ordered locus">HI_0006</name>
</gene>
<accession>P46448</accession>
<proteinExistence type="inferred from homology"/>
<comment type="function">
    <text>Allows to use formate as major electron donor during anaerobic respiration. Subunit alpha possibly forms the active site.</text>
</comment>
<comment type="catalytic activity">
    <reaction>
        <text>formate + NAD(+) = CO2 + NADH</text>
        <dbReference type="Rhea" id="RHEA:15985"/>
        <dbReference type="ChEBI" id="CHEBI:15740"/>
        <dbReference type="ChEBI" id="CHEBI:16526"/>
        <dbReference type="ChEBI" id="CHEBI:57540"/>
        <dbReference type="ChEBI" id="CHEBI:57945"/>
        <dbReference type="EC" id="1.17.1.9"/>
    </reaction>
</comment>
<comment type="cofactor">
    <cofactor evidence="1">
        <name>Mo-bis(molybdopterin guanine dinucleotide)</name>
        <dbReference type="ChEBI" id="CHEBI:60539"/>
    </cofactor>
    <text evidence="1">Binds 1 molybdenum-bis(molybdopterin guanine dinucleotide) (Mo-bis-MGD) cofactor per subunit.</text>
</comment>
<comment type="cofactor">
    <cofactor evidence="4">
        <name>[4Fe-4S] cluster</name>
        <dbReference type="ChEBI" id="CHEBI:49883"/>
    </cofactor>
    <text evidence="4">Binds 1 [4Fe-4S] cluster.</text>
</comment>
<comment type="subunit">
    <text>Formate dehydrogenase is a membrane-bound complex, formed by subunits alpha, beta and gamma.</text>
</comment>
<comment type="subcellular location">
    <subcellularLocation>
        <location evidence="4">Periplasm</location>
    </subcellularLocation>
</comment>
<comment type="PTM">
    <text>Predicted to be exported by the Tat system. The position of the signal peptide cleavage has not been experimentally proven.</text>
</comment>
<comment type="similarity">
    <text evidence="4">Belongs to the prokaryotic molybdopterin-containing oxidoreductase family.</text>
</comment>
<dbReference type="EC" id="1.17.1.9"/>
<dbReference type="EMBL" id="L42023">
    <property type="status" value="NOT_ANNOTATED_CDS"/>
    <property type="molecule type" value="Genomic_DNA"/>
</dbReference>
<dbReference type="Proteomes" id="UP000000579">
    <property type="component" value="Chromosome"/>
</dbReference>
<dbReference type="GO" id="GO:0009326">
    <property type="term" value="C:formate dehydrogenase complex"/>
    <property type="evidence" value="ECO:0000318"/>
    <property type="project" value="GO_Central"/>
</dbReference>
<dbReference type="GO" id="GO:0042597">
    <property type="term" value="C:periplasmic space"/>
    <property type="evidence" value="ECO:0007669"/>
    <property type="project" value="UniProtKB-SubCell"/>
</dbReference>
<dbReference type="GO" id="GO:0051539">
    <property type="term" value="F:4 iron, 4 sulfur cluster binding"/>
    <property type="evidence" value="ECO:0007669"/>
    <property type="project" value="UniProtKB-KW"/>
</dbReference>
<dbReference type="GO" id="GO:0009055">
    <property type="term" value="F:electron transfer activity"/>
    <property type="evidence" value="ECO:0000318"/>
    <property type="project" value="GO_Central"/>
</dbReference>
<dbReference type="GO" id="GO:0047111">
    <property type="term" value="F:formate dehydrogenase (cytochrome-c-553) activity"/>
    <property type="evidence" value="ECO:0007669"/>
    <property type="project" value="InterPro"/>
</dbReference>
<dbReference type="GO" id="GO:0008863">
    <property type="term" value="F:formate dehydrogenase (NAD+) activity"/>
    <property type="evidence" value="ECO:0007669"/>
    <property type="project" value="UniProtKB-EC"/>
</dbReference>
<dbReference type="GO" id="GO:0036397">
    <property type="term" value="F:formate dehydrogenase (quinone) activity"/>
    <property type="evidence" value="ECO:0000318"/>
    <property type="project" value="GO_Central"/>
</dbReference>
<dbReference type="GO" id="GO:0046872">
    <property type="term" value="F:metal ion binding"/>
    <property type="evidence" value="ECO:0007669"/>
    <property type="project" value="UniProtKB-KW"/>
</dbReference>
<dbReference type="GO" id="GO:0043546">
    <property type="term" value="F:molybdopterin cofactor binding"/>
    <property type="evidence" value="ECO:0007669"/>
    <property type="project" value="InterPro"/>
</dbReference>
<dbReference type="GO" id="GO:0009061">
    <property type="term" value="P:anaerobic respiration"/>
    <property type="evidence" value="ECO:0000318"/>
    <property type="project" value="GO_Central"/>
</dbReference>
<dbReference type="GO" id="GO:0015944">
    <property type="term" value="P:formate oxidation"/>
    <property type="evidence" value="ECO:0000318"/>
    <property type="project" value="GO_Central"/>
</dbReference>
<dbReference type="CDD" id="cd02792">
    <property type="entry name" value="MopB_CT_Formate-Dh-Na-like"/>
    <property type="match status" value="1"/>
</dbReference>
<dbReference type="CDD" id="cd02752">
    <property type="entry name" value="MopB_Formate-Dh-Na-like"/>
    <property type="match status" value="1"/>
</dbReference>
<dbReference type="FunFam" id="2.40.40.20:FF:000017">
    <property type="entry name" value="Formate dehydrogenase, alpha subunit"/>
    <property type="match status" value="1"/>
</dbReference>
<dbReference type="FunFam" id="3.40.228.10:FF:000006">
    <property type="entry name" value="Formate dehydrogenase, alpha subunit, selenocysteine-containing"/>
    <property type="match status" value="1"/>
</dbReference>
<dbReference type="FunFam" id="3.40.228.10:FF:000009">
    <property type="entry name" value="Formate dehydrogenase, alpha subunit, selenocysteine-containing"/>
    <property type="match status" value="1"/>
</dbReference>
<dbReference type="FunFam" id="3.40.50.740:FF:000007">
    <property type="entry name" value="Formate dehydrogenase, alpha subunit, selenocysteine-containing"/>
    <property type="match status" value="1"/>
</dbReference>
<dbReference type="FunFam" id="3.30.200.210:FF:000003">
    <property type="entry name" value="Formate dehydrogenase-N subunit alpha"/>
    <property type="match status" value="1"/>
</dbReference>
<dbReference type="Gene3D" id="2.40.40.20">
    <property type="match status" value="1"/>
</dbReference>
<dbReference type="Gene3D" id="3.30.200.210">
    <property type="match status" value="1"/>
</dbReference>
<dbReference type="Gene3D" id="3.40.50.740">
    <property type="match status" value="1"/>
</dbReference>
<dbReference type="Gene3D" id="3.40.228.10">
    <property type="entry name" value="Dimethylsulfoxide Reductase, domain 2"/>
    <property type="match status" value="2"/>
</dbReference>
<dbReference type="InterPro" id="IPR009010">
    <property type="entry name" value="Asp_de-COase-like_dom_sf"/>
</dbReference>
<dbReference type="InterPro" id="IPR006443">
    <property type="entry name" value="Formate-DH-alph_fdnG"/>
</dbReference>
<dbReference type="InterPro" id="IPR006657">
    <property type="entry name" value="MoPterin_dinucl-bd_dom"/>
</dbReference>
<dbReference type="InterPro" id="IPR006656">
    <property type="entry name" value="Mopterin_OxRdtase"/>
</dbReference>
<dbReference type="InterPro" id="IPR006963">
    <property type="entry name" value="Mopterin_OxRdtase_4Fe-4S_dom"/>
</dbReference>
<dbReference type="InterPro" id="IPR006655">
    <property type="entry name" value="Mopterin_OxRdtase_prok_CS"/>
</dbReference>
<dbReference type="InterPro" id="IPR027467">
    <property type="entry name" value="MopterinOxRdtase_cofactor_BS"/>
</dbReference>
<dbReference type="InterPro" id="IPR006311">
    <property type="entry name" value="TAT_signal"/>
</dbReference>
<dbReference type="NCBIfam" id="TIGR01553">
    <property type="entry name" value="formate-DH-alph"/>
    <property type="match status" value="1"/>
</dbReference>
<dbReference type="PANTHER" id="PTHR43598:SF1">
    <property type="entry name" value="FORMATE DEHYDROGENASE-O MAJOR SUBUNIT"/>
    <property type="match status" value="1"/>
</dbReference>
<dbReference type="PANTHER" id="PTHR43598">
    <property type="entry name" value="TUNGSTEN-CONTAINING FORMYLMETHANOFURAN DEHYDROGENASE 2 SUBUNIT B"/>
    <property type="match status" value="1"/>
</dbReference>
<dbReference type="Pfam" id="PF04879">
    <property type="entry name" value="Molybdop_Fe4S4"/>
    <property type="match status" value="1"/>
</dbReference>
<dbReference type="Pfam" id="PF00384">
    <property type="entry name" value="Molybdopterin"/>
    <property type="match status" value="1"/>
</dbReference>
<dbReference type="Pfam" id="PF01568">
    <property type="entry name" value="Molydop_binding"/>
    <property type="match status" value="1"/>
</dbReference>
<dbReference type="SMART" id="SM00926">
    <property type="entry name" value="Molybdop_Fe4S4"/>
    <property type="match status" value="1"/>
</dbReference>
<dbReference type="SUPFAM" id="SSF50692">
    <property type="entry name" value="ADC-like"/>
    <property type="match status" value="1"/>
</dbReference>
<dbReference type="SUPFAM" id="SSF53706">
    <property type="entry name" value="Formate dehydrogenase/DMSO reductase, domains 1-3"/>
    <property type="match status" value="1"/>
</dbReference>
<dbReference type="PROSITE" id="PS51669">
    <property type="entry name" value="4FE4S_MOW_BIS_MGD"/>
    <property type="match status" value="1"/>
</dbReference>
<dbReference type="PROSITE" id="PS00551">
    <property type="entry name" value="MOLYBDOPTERIN_PROK_1"/>
    <property type="match status" value="1"/>
</dbReference>
<dbReference type="PROSITE" id="PS00932">
    <property type="entry name" value="MOLYBDOPTERIN_PROK_3"/>
    <property type="match status" value="1"/>
</dbReference>
<dbReference type="PROSITE" id="PS51318">
    <property type="entry name" value="TAT"/>
    <property type="match status" value="1"/>
</dbReference>
<feature type="signal peptide" description="Tat-type signal" evidence="2">
    <location>
        <begin position="1"/>
        <end position="33"/>
    </location>
</feature>
<feature type="chain" id="PRO_0000063224" description="Formate dehydrogenase major subunit">
    <location>
        <begin position="34"/>
        <end position="1028"/>
    </location>
</feature>
<feature type="domain" description="4Fe-4S Mo/W bis-MGD-type" evidence="3">
    <location>
        <begin position="43"/>
        <end position="114"/>
    </location>
</feature>
<feature type="binding site" evidence="3">
    <location>
        <position position="50"/>
    </location>
    <ligand>
        <name>[4Fe-4S] cluster</name>
        <dbReference type="ChEBI" id="CHEBI:49883"/>
    </ligand>
</feature>
<feature type="binding site" evidence="3">
    <location>
        <position position="53"/>
    </location>
    <ligand>
        <name>[4Fe-4S] cluster</name>
        <dbReference type="ChEBI" id="CHEBI:49883"/>
    </ligand>
</feature>
<feature type="binding site" evidence="3">
    <location>
        <position position="57"/>
    </location>
    <ligand>
        <name>[4Fe-4S] cluster</name>
        <dbReference type="ChEBI" id="CHEBI:49883"/>
    </ligand>
</feature>
<feature type="binding site" evidence="3">
    <location>
        <position position="100"/>
    </location>
    <ligand>
        <name>[4Fe-4S] cluster</name>
        <dbReference type="ChEBI" id="CHEBI:49883"/>
    </ligand>
</feature>
<feature type="non-standard amino acid" description="Selenocysteine" evidence="4">
    <location>
        <position position="204"/>
    </location>
</feature>
<reference key="1">
    <citation type="journal article" date="1995" name="Science">
        <title>Whole-genome random sequencing and assembly of Haemophilus influenzae Rd.</title>
        <authorList>
            <person name="Fleischmann R.D."/>
            <person name="Adams M.D."/>
            <person name="White O."/>
            <person name="Clayton R.A."/>
            <person name="Kirkness E.F."/>
            <person name="Kerlavage A.R."/>
            <person name="Bult C.J."/>
            <person name="Tomb J.-F."/>
            <person name="Dougherty B.A."/>
            <person name="Merrick J.M."/>
            <person name="McKenney K."/>
            <person name="Sutton G.G."/>
            <person name="FitzHugh W."/>
            <person name="Fields C.A."/>
            <person name="Gocayne J.D."/>
            <person name="Scott J.D."/>
            <person name="Shirley R."/>
            <person name="Liu L.-I."/>
            <person name="Glodek A."/>
            <person name="Kelley J.M."/>
            <person name="Weidman J.F."/>
            <person name="Phillips C.A."/>
            <person name="Spriggs T."/>
            <person name="Hedblom E."/>
            <person name="Cotton M.D."/>
            <person name="Utterback T.R."/>
            <person name="Hanna M.C."/>
            <person name="Nguyen D.T."/>
            <person name="Saudek D.M."/>
            <person name="Brandon R.C."/>
            <person name="Fine L.D."/>
            <person name="Fritchman J.L."/>
            <person name="Fuhrmann J.L."/>
            <person name="Geoghagen N.S.M."/>
            <person name="Gnehm C.L."/>
            <person name="McDonald L.A."/>
            <person name="Small K.V."/>
            <person name="Fraser C.M."/>
            <person name="Smith H.O."/>
            <person name="Venter J.C."/>
        </authorList>
    </citation>
    <scope>NUCLEOTIDE SEQUENCE [LARGE SCALE GENOMIC DNA]</scope>
    <source>
        <strain>ATCC 51907 / DSM 11121 / KW20 / Rd</strain>
    </source>
</reference>
<name>FDXG_HAEIN</name>